<proteinExistence type="inferred from homology"/>
<comment type="subcellular location">
    <subcellularLocation>
        <location>Plastid</location>
        <location>Chloroplast</location>
    </subcellularLocation>
</comment>
<comment type="similarity">
    <text evidence="1">Belongs to the bacterial ribosomal protein bL32 family.</text>
</comment>
<evidence type="ECO:0000255" key="1">
    <source>
        <dbReference type="HAMAP-Rule" id="MF_00340"/>
    </source>
</evidence>
<evidence type="ECO:0000305" key="2"/>
<organism>
    <name type="scientific">Capsella bursa-pastoris</name>
    <name type="common">Shepherd's purse</name>
    <name type="synonym">Thlaspi bursa-pastoris</name>
    <dbReference type="NCBI Taxonomy" id="3719"/>
    <lineage>
        <taxon>Eukaryota</taxon>
        <taxon>Viridiplantae</taxon>
        <taxon>Streptophyta</taxon>
        <taxon>Embryophyta</taxon>
        <taxon>Tracheophyta</taxon>
        <taxon>Spermatophyta</taxon>
        <taxon>Magnoliopsida</taxon>
        <taxon>eudicotyledons</taxon>
        <taxon>Gunneridae</taxon>
        <taxon>Pentapetalae</taxon>
        <taxon>rosids</taxon>
        <taxon>malvids</taxon>
        <taxon>Brassicales</taxon>
        <taxon>Brassicaceae</taxon>
        <taxon>Camelineae</taxon>
        <taxon>Capsella</taxon>
    </lineage>
</organism>
<name>RK32_CAPBU</name>
<geneLocation type="chloroplast"/>
<sequence length="52" mass="6047">MAVPKKRTSISKKRIRKNIWKRKGYWTSLKAFSLGKSLSTGNSKSFFVQQNK</sequence>
<feature type="chain" id="PRO_0000296609" description="Large ribosomal subunit protein bL32c">
    <location>
        <begin position="1"/>
        <end position="52"/>
    </location>
</feature>
<dbReference type="EMBL" id="AP009371">
    <property type="protein sequence ID" value="BAF50248.1"/>
    <property type="molecule type" value="Genomic_DNA"/>
</dbReference>
<dbReference type="RefSeq" id="YP_001123423.1">
    <property type="nucleotide sequence ID" value="NC_009270.1"/>
</dbReference>
<dbReference type="SMR" id="A4QKP3"/>
<dbReference type="GeneID" id="4961700"/>
<dbReference type="GO" id="GO:0009507">
    <property type="term" value="C:chloroplast"/>
    <property type="evidence" value="ECO:0007669"/>
    <property type="project" value="UniProtKB-SubCell"/>
</dbReference>
<dbReference type="GO" id="GO:0015934">
    <property type="term" value="C:large ribosomal subunit"/>
    <property type="evidence" value="ECO:0007669"/>
    <property type="project" value="InterPro"/>
</dbReference>
<dbReference type="GO" id="GO:0003735">
    <property type="term" value="F:structural constituent of ribosome"/>
    <property type="evidence" value="ECO:0007669"/>
    <property type="project" value="InterPro"/>
</dbReference>
<dbReference type="GO" id="GO:0006412">
    <property type="term" value="P:translation"/>
    <property type="evidence" value="ECO:0007669"/>
    <property type="project" value="UniProtKB-UniRule"/>
</dbReference>
<dbReference type="HAMAP" id="MF_00340">
    <property type="entry name" value="Ribosomal_bL32"/>
    <property type="match status" value="1"/>
</dbReference>
<dbReference type="InterPro" id="IPR002677">
    <property type="entry name" value="Ribosomal_bL32"/>
</dbReference>
<dbReference type="InterPro" id="IPR044958">
    <property type="entry name" value="Ribosomal_bL32_plant/cyanobact"/>
</dbReference>
<dbReference type="InterPro" id="IPR011332">
    <property type="entry name" value="Ribosomal_zn-bd"/>
</dbReference>
<dbReference type="PANTHER" id="PTHR36083">
    <property type="entry name" value="50S RIBOSOMAL PROTEIN L32, CHLOROPLASTIC"/>
    <property type="match status" value="1"/>
</dbReference>
<dbReference type="PANTHER" id="PTHR36083:SF1">
    <property type="entry name" value="LARGE RIBOSOMAL SUBUNIT PROTEIN BL32C"/>
    <property type="match status" value="1"/>
</dbReference>
<dbReference type="Pfam" id="PF01783">
    <property type="entry name" value="Ribosomal_L32p"/>
    <property type="match status" value="1"/>
</dbReference>
<dbReference type="SUPFAM" id="SSF57829">
    <property type="entry name" value="Zn-binding ribosomal proteins"/>
    <property type="match status" value="1"/>
</dbReference>
<protein>
    <recommendedName>
        <fullName evidence="1">Large ribosomal subunit protein bL32c</fullName>
    </recommendedName>
    <alternativeName>
        <fullName evidence="2">50S ribosomal protein L32, chloroplastic</fullName>
    </alternativeName>
</protein>
<reference key="1">
    <citation type="submission" date="2007-03" db="EMBL/GenBank/DDBJ databases">
        <title>Sequencing analysis of Capsella bursa-pastoris JO22 chloroplast DNA.</title>
        <authorList>
            <person name="Hosouchi T."/>
            <person name="Tsuruoka H."/>
            <person name="Kotani H."/>
        </authorList>
    </citation>
    <scope>NUCLEOTIDE SEQUENCE [LARGE SCALE GENOMIC DNA]</scope>
</reference>
<keyword id="KW-0150">Chloroplast</keyword>
<keyword id="KW-0934">Plastid</keyword>
<keyword id="KW-0687">Ribonucleoprotein</keyword>
<keyword id="KW-0689">Ribosomal protein</keyword>
<gene>
    <name evidence="1" type="primary">rpl32</name>
</gene>
<accession>A4QKP3</accession>